<keyword id="KW-0028">Amino-acid biosynthesis</keyword>
<keyword id="KW-0032">Aminotransferase</keyword>
<keyword id="KW-0368">Histidine biosynthesis</keyword>
<keyword id="KW-0663">Pyridoxal phosphate</keyword>
<keyword id="KW-0808">Transferase</keyword>
<feature type="chain" id="PRO_1000072945" description="Histidinol-phosphate aminotransferase">
    <location>
        <begin position="1"/>
        <end position="346"/>
    </location>
</feature>
<feature type="modified residue" description="N6-(pyridoxal phosphate)lysine" evidence="1">
    <location>
        <position position="209"/>
    </location>
</feature>
<organism>
    <name type="scientific">Vibrio cholerae serotype O1 (strain ATCC 39541 / Classical Ogawa 395 / O395)</name>
    <dbReference type="NCBI Taxonomy" id="345073"/>
    <lineage>
        <taxon>Bacteria</taxon>
        <taxon>Pseudomonadati</taxon>
        <taxon>Pseudomonadota</taxon>
        <taxon>Gammaproteobacteria</taxon>
        <taxon>Vibrionales</taxon>
        <taxon>Vibrionaceae</taxon>
        <taxon>Vibrio</taxon>
    </lineage>
</organism>
<sequence>MEKLARQQIQALTPYLSARRIGGSGDVWLNANESPFNNEYKTDFARLNRYSDCQPKAMIQAYANYAGVQPEQVLTSRGADEGIELLIRAFCEPNQDAILFCPPTYGMYAISAETFGVERKKVPLTTDWQLDLPSIEANLDRVKLVFVCSPNNPTGNLVKRADIIKLLEMTQDRAIVVMDEAYIDFCPEASTVDLLAQYPNLAILRTLSKAFALAGLRCGFTLANAELINVLLKVIAPYPVPVPVAEIAVQALSPAGLARAKYQVLDLGANRAYLQVGLSMVPGVQVFEGWGNYLLVKFPDGDALFKAAWEHGIILRNSPIENCVRISVGNREECEKTVAFIRNYYQ</sequence>
<comment type="catalytic activity">
    <reaction evidence="1">
        <text>L-histidinol phosphate + 2-oxoglutarate = 3-(imidazol-4-yl)-2-oxopropyl phosphate + L-glutamate</text>
        <dbReference type="Rhea" id="RHEA:23744"/>
        <dbReference type="ChEBI" id="CHEBI:16810"/>
        <dbReference type="ChEBI" id="CHEBI:29985"/>
        <dbReference type="ChEBI" id="CHEBI:57766"/>
        <dbReference type="ChEBI" id="CHEBI:57980"/>
        <dbReference type="EC" id="2.6.1.9"/>
    </reaction>
</comment>
<comment type="cofactor">
    <cofactor evidence="1">
        <name>pyridoxal 5'-phosphate</name>
        <dbReference type="ChEBI" id="CHEBI:597326"/>
    </cofactor>
</comment>
<comment type="pathway">
    <text evidence="1">Amino-acid biosynthesis; L-histidine biosynthesis; L-histidine from 5-phospho-alpha-D-ribose 1-diphosphate: step 7/9.</text>
</comment>
<comment type="subunit">
    <text evidence="1">Homodimer.</text>
</comment>
<comment type="similarity">
    <text evidence="1">Belongs to the class-II pyridoxal-phosphate-dependent aminotransferase family. Histidinol-phosphate aminotransferase subfamily.</text>
</comment>
<gene>
    <name evidence="1" type="primary">hisC</name>
    <name type="ordered locus">VC0395_A0704</name>
    <name type="ordered locus">VC395_1201</name>
</gene>
<proteinExistence type="inferred from homology"/>
<dbReference type="EC" id="2.6.1.9" evidence="1"/>
<dbReference type="EMBL" id="CP000627">
    <property type="protein sequence ID" value="ABQ19778.1"/>
    <property type="molecule type" value="Genomic_DNA"/>
</dbReference>
<dbReference type="EMBL" id="CP001235">
    <property type="protein sequence ID" value="ACP09211.1"/>
    <property type="molecule type" value="Genomic_DNA"/>
</dbReference>
<dbReference type="RefSeq" id="WP_000412889.1">
    <property type="nucleotide sequence ID" value="NZ_JAACZH010000034.1"/>
</dbReference>
<dbReference type="SMR" id="A5F2A2"/>
<dbReference type="KEGG" id="vco:VC0395_A0704"/>
<dbReference type="KEGG" id="vcr:VC395_1201"/>
<dbReference type="PATRIC" id="fig|345073.21.peg.1168"/>
<dbReference type="eggNOG" id="COG0079">
    <property type="taxonomic scope" value="Bacteria"/>
</dbReference>
<dbReference type="HOGENOM" id="CLU_017584_3_1_6"/>
<dbReference type="OrthoDB" id="9813612at2"/>
<dbReference type="UniPathway" id="UPA00031">
    <property type="reaction ID" value="UER00012"/>
</dbReference>
<dbReference type="Proteomes" id="UP000000249">
    <property type="component" value="Chromosome 2"/>
</dbReference>
<dbReference type="GO" id="GO:0004400">
    <property type="term" value="F:histidinol-phosphate transaminase activity"/>
    <property type="evidence" value="ECO:0007669"/>
    <property type="project" value="UniProtKB-UniRule"/>
</dbReference>
<dbReference type="GO" id="GO:0030170">
    <property type="term" value="F:pyridoxal phosphate binding"/>
    <property type="evidence" value="ECO:0007669"/>
    <property type="project" value="InterPro"/>
</dbReference>
<dbReference type="GO" id="GO:0000105">
    <property type="term" value="P:L-histidine biosynthetic process"/>
    <property type="evidence" value="ECO:0007669"/>
    <property type="project" value="UniProtKB-UniRule"/>
</dbReference>
<dbReference type="CDD" id="cd00609">
    <property type="entry name" value="AAT_like"/>
    <property type="match status" value="1"/>
</dbReference>
<dbReference type="FunFam" id="3.40.640.10:FF:000032">
    <property type="entry name" value="Histidinol-phosphate aminotransferase"/>
    <property type="match status" value="1"/>
</dbReference>
<dbReference type="Gene3D" id="3.90.1150.10">
    <property type="entry name" value="Aspartate Aminotransferase, domain 1"/>
    <property type="match status" value="1"/>
</dbReference>
<dbReference type="Gene3D" id="3.40.640.10">
    <property type="entry name" value="Type I PLP-dependent aspartate aminotransferase-like (Major domain)"/>
    <property type="match status" value="1"/>
</dbReference>
<dbReference type="HAMAP" id="MF_01023">
    <property type="entry name" value="HisC_aminotrans_2"/>
    <property type="match status" value="1"/>
</dbReference>
<dbReference type="InterPro" id="IPR001917">
    <property type="entry name" value="Aminotrans_II_pyridoxalP_BS"/>
</dbReference>
<dbReference type="InterPro" id="IPR004839">
    <property type="entry name" value="Aminotransferase_I/II_large"/>
</dbReference>
<dbReference type="InterPro" id="IPR005861">
    <property type="entry name" value="HisP_aminotrans"/>
</dbReference>
<dbReference type="InterPro" id="IPR015424">
    <property type="entry name" value="PyrdxlP-dep_Trfase"/>
</dbReference>
<dbReference type="InterPro" id="IPR015421">
    <property type="entry name" value="PyrdxlP-dep_Trfase_major"/>
</dbReference>
<dbReference type="InterPro" id="IPR015422">
    <property type="entry name" value="PyrdxlP-dep_Trfase_small"/>
</dbReference>
<dbReference type="NCBIfam" id="TIGR01141">
    <property type="entry name" value="hisC"/>
    <property type="match status" value="1"/>
</dbReference>
<dbReference type="PANTHER" id="PTHR42885:SF2">
    <property type="entry name" value="HISTIDINOL-PHOSPHATE AMINOTRANSFERASE"/>
    <property type="match status" value="1"/>
</dbReference>
<dbReference type="PANTHER" id="PTHR42885">
    <property type="entry name" value="HISTIDINOL-PHOSPHATE AMINOTRANSFERASE-RELATED"/>
    <property type="match status" value="1"/>
</dbReference>
<dbReference type="Pfam" id="PF00155">
    <property type="entry name" value="Aminotran_1_2"/>
    <property type="match status" value="1"/>
</dbReference>
<dbReference type="SUPFAM" id="SSF53383">
    <property type="entry name" value="PLP-dependent transferases"/>
    <property type="match status" value="1"/>
</dbReference>
<dbReference type="PROSITE" id="PS00599">
    <property type="entry name" value="AA_TRANSFER_CLASS_2"/>
    <property type="match status" value="1"/>
</dbReference>
<evidence type="ECO:0000255" key="1">
    <source>
        <dbReference type="HAMAP-Rule" id="MF_01023"/>
    </source>
</evidence>
<protein>
    <recommendedName>
        <fullName evidence="1">Histidinol-phosphate aminotransferase</fullName>
        <ecNumber evidence="1">2.6.1.9</ecNumber>
    </recommendedName>
    <alternativeName>
        <fullName evidence="1">Imidazole acetol-phosphate transaminase</fullName>
    </alternativeName>
</protein>
<accession>A5F2A2</accession>
<accession>C3LZJ5</accession>
<reference key="1">
    <citation type="submission" date="2007-03" db="EMBL/GenBank/DDBJ databases">
        <authorList>
            <person name="Heidelberg J."/>
        </authorList>
    </citation>
    <scope>NUCLEOTIDE SEQUENCE [LARGE SCALE GENOMIC DNA]</scope>
    <source>
        <strain>ATCC 39541 / Classical Ogawa 395 / O395</strain>
    </source>
</reference>
<reference key="2">
    <citation type="journal article" date="2008" name="PLoS ONE">
        <title>A recalibrated molecular clock and independent origins for the cholera pandemic clones.</title>
        <authorList>
            <person name="Feng L."/>
            <person name="Reeves P.R."/>
            <person name="Lan R."/>
            <person name="Ren Y."/>
            <person name="Gao C."/>
            <person name="Zhou Z."/>
            <person name="Ren Y."/>
            <person name="Cheng J."/>
            <person name="Wang W."/>
            <person name="Wang J."/>
            <person name="Qian W."/>
            <person name="Li D."/>
            <person name="Wang L."/>
        </authorList>
    </citation>
    <scope>NUCLEOTIDE SEQUENCE [LARGE SCALE GENOMIC DNA]</scope>
    <source>
        <strain>ATCC 39541 / Classical Ogawa 395 / O395</strain>
    </source>
</reference>
<name>HIS8_VIBC3</name>